<gene>
    <name type="primary">TAS2R43</name>
</gene>
<reference key="1">
    <citation type="journal article" date="2004" name="Proc. Natl. Acad. Sci. U.S.A.">
        <title>Divergence of T2R chemosensory receptor families in humans, bonobos, and chimpanzees.</title>
        <authorList>
            <person name="Parry C.M."/>
            <person name="Erkner A."/>
            <person name="le Coutre J."/>
        </authorList>
    </citation>
    <scope>NUCLEOTIDE SEQUENCE [GENOMIC DNA]</scope>
</reference>
<feature type="chain" id="PRO_0000082304" description="Taste receptor type 2 member 43">
    <location>
        <begin position="1"/>
        <end position="309"/>
    </location>
</feature>
<feature type="topological domain" description="Extracellular" evidence="2">
    <location>
        <position position="1"/>
    </location>
</feature>
<feature type="transmembrane region" description="Helical; Name=1" evidence="2">
    <location>
        <begin position="2"/>
        <end position="22"/>
    </location>
</feature>
<feature type="topological domain" description="Cytoplasmic" evidence="2">
    <location>
        <begin position="23"/>
        <end position="46"/>
    </location>
</feature>
<feature type="transmembrane region" description="Helical; Name=2" evidence="2">
    <location>
        <begin position="47"/>
        <end position="67"/>
    </location>
</feature>
<feature type="topological domain" description="Extracellular" evidence="2">
    <location>
        <begin position="68"/>
        <end position="86"/>
    </location>
</feature>
<feature type="transmembrane region" description="Helical; Name=3" evidence="2">
    <location>
        <begin position="87"/>
        <end position="107"/>
    </location>
</feature>
<feature type="topological domain" description="Cytoplasmic" evidence="2">
    <location>
        <begin position="108"/>
        <end position="126"/>
    </location>
</feature>
<feature type="transmembrane region" description="Helical; Name=4" evidence="2">
    <location>
        <begin position="127"/>
        <end position="147"/>
    </location>
</feature>
<feature type="topological domain" description="Extracellular" evidence="2">
    <location>
        <begin position="148"/>
        <end position="178"/>
    </location>
</feature>
<feature type="transmembrane region" description="Helical; Name=5" evidence="2">
    <location>
        <begin position="179"/>
        <end position="199"/>
    </location>
</feature>
<feature type="topological domain" description="Cytoplasmic" evidence="2">
    <location>
        <begin position="200"/>
        <end position="229"/>
    </location>
</feature>
<feature type="transmembrane region" description="Helical; Name=6" evidence="2">
    <location>
        <begin position="230"/>
        <end position="250"/>
    </location>
</feature>
<feature type="topological domain" description="Extracellular" evidence="2">
    <location>
        <begin position="251"/>
        <end position="259"/>
    </location>
</feature>
<feature type="transmembrane region" description="Helical; Name=7" evidence="2">
    <location>
        <begin position="260"/>
        <end position="280"/>
    </location>
</feature>
<feature type="topological domain" description="Cytoplasmic" evidence="2">
    <location>
        <begin position="281"/>
        <end position="309"/>
    </location>
</feature>
<feature type="glycosylation site" description="N-linked (GlcNAc...) asparagine" evidence="2">
    <location>
        <position position="161"/>
    </location>
</feature>
<feature type="glycosylation site" description="N-linked (GlcNAc...) asparagine" evidence="2">
    <location>
        <position position="176"/>
    </location>
</feature>
<sequence length="309" mass="35611">MITFLPIIFSSLVVVTFVIGNFANGFIALVNSIEWFKRQKISFADQILTALAVSRVGLLWVLLLNWYLTVLNPAFNSVEVRTTAYNIWAVINHFSNWLATSLSIFYLLKIANFSNFIFLHLKRRVKSVILVMLLGPLLFLACHLFMINMNEIVRTKEFDGNMTWKIKLKSAMYFSNMTVTMVANLVPFTLTLLSFLLLICSLCKHLKKMQLHGKGSQDPSTKVHIKALQTVISFLLLCAIYFLSIMISVWSFGSLENKPVFMFCKAIRFSYPSIHPFILIWGNKKLKQTFLSVFWQMRYWVKGEKTSSP</sequence>
<organism>
    <name type="scientific">Pan paniscus</name>
    <name type="common">Pygmy chimpanzee</name>
    <name type="synonym">Bonobo</name>
    <dbReference type="NCBI Taxonomy" id="9597"/>
    <lineage>
        <taxon>Eukaryota</taxon>
        <taxon>Metazoa</taxon>
        <taxon>Chordata</taxon>
        <taxon>Craniata</taxon>
        <taxon>Vertebrata</taxon>
        <taxon>Euteleostomi</taxon>
        <taxon>Mammalia</taxon>
        <taxon>Eutheria</taxon>
        <taxon>Euarchontoglires</taxon>
        <taxon>Primates</taxon>
        <taxon>Haplorrhini</taxon>
        <taxon>Catarrhini</taxon>
        <taxon>Hominidae</taxon>
        <taxon>Pan</taxon>
    </lineage>
</organism>
<evidence type="ECO:0000250" key="1"/>
<evidence type="ECO:0000255" key="2"/>
<evidence type="ECO:0000305" key="3"/>
<dbReference type="EMBL" id="AY677147">
    <property type="protein sequence ID" value="AAV28575.1"/>
    <property type="molecule type" value="Genomic_DNA"/>
</dbReference>
<dbReference type="SMR" id="Q5Y500"/>
<dbReference type="GlyCosmos" id="Q5Y500">
    <property type="glycosylation" value="2 sites, No reported glycans"/>
</dbReference>
<dbReference type="Proteomes" id="UP000240080">
    <property type="component" value="Unplaced"/>
</dbReference>
<dbReference type="GO" id="GO:0060170">
    <property type="term" value="C:ciliary membrane"/>
    <property type="evidence" value="ECO:0007669"/>
    <property type="project" value="UniProtKB-SubCell"/>
</dbReference>
<dbReference type="GO" id="GO:0031514">
    <property type="term" value="C:motile cilium"/>
    <property type="evidence" value="ECO:0000250"/>
    <property type="project" value="UniProtKB"/>
</dbReference>
<dbReference type="GO" id="GO:0033038">
    <property type="term" value="F:bitter taste receptor activity"/>
    <property type="evidence" value="ECO:0007669"/>
    <property type="project" value="InterPro"/>
</dbReference>
<dbReference type="GO" id="GO:0004930">
    <property type="term" value="F:G protein-coupled receptor activity"/>
    <property type="evidence" value="ECO:0007669"/>
    <property type="project" value="UniProtKB-KW"/>
</dbReference>
<dbReference type="CDD" id="cd15027">
    <property type="entry name" value="7tm_TAS2R43-like"/>
    <property type="match status" value="1"/>
</dbReference>
<dbReference type="FunFam" id="1.20.1070.10:FF:000042">
    <property type="entry name" value="Taste receptor type 2 member 7"/>
    <property type="match status" value="1"/>
</dbReference>
<dbReference type="Gene3D" id="1.20.1070.10">
    <property type="entry name" value="Rhodopsin 7-helix transmembrane proteins"/>
    <property type="match status" value="1"/>
</dbReference>
<dbReference type="InterPro" id="IPR007960">
    <property type="entry name" value="TAS2R"/>
</dbReference>
<dbReference type="PANTHER" id="PTHR11394">
    <property type="entry name" value="TASTE RECEPTOR TYPE 2"/>
    <property type="match status" value="1"/>
</dbReference>
<dbReference type="PANTHER" id="PTHR11394:SF127">
    <property type="entry name" value="TASTE RECEPTOR TYPE 2 MEMBER 43"/>
    <property type="match status" value="1"/>
</dbReference>
<dbReference type="Pfam" id="PF05296">
    <property type="entry name" value="TAS2R"/>
    <property type="match status" value="1"/>
</dbReference>
<dbReference type="SUPFAM" id="SSF81321">
    <property type="entry name" value="Family A G protein-coupled receptor-like"/>
    <property type="match status" value="1"/>
</dbReference>
<accession>Q5Y500</accession>
<protein>
    <recommendedName>
        <fullName>Taste receptor type 2 member 43</fullName>
        <shortName>T2R43</shortName>
    </recommendedName>
</protein>
<proteinExistence type="inferred from homology"/>
<name>T2R43_PANPA</name>
<comment type="function">
    <text evidence="1">Gustducin-coupled receptor immplicated in the perception of bitter compounds in the oral cavity and the gastrointestinal tract. Signals through PLCB2 and the calcium-regulated cation channel TRPM5. Activated by the sulfonyl amide sweeteners saccharin and acesulfame K. In airway epithelial cells, binding of bitter compounds increases the intracellular calcium ion concentration and stimulates ciliary beat frequency. May act as chemosensory receptors in airway epithelial cells to detect and eliminate potential noxious agents from the airways (By similarity).</text>
</comment>
<comment type="subcellular location">
    <subcellularLocation>
        <location evidence="1">Membrane</location>
        <topology>Multi-pass membrane protein</topology>
    </subcellularLocation>
    <subcellularLocation>
        <location>Cell projection</location>
        <location>Cilium membrane</location>
    </subcellularLocation>
    <text evidence="1">In airway epithelial cells, localizes to motile cilia.</text>
</comment>
<comment type="miscellaneous">
    <text>Most taste cells may be activated by a limited number of bitter compounds; individual taste cells can discriminate among bitter stimuli.</text>
</comment>
<comment type="similarity">
    <text evidence="3">Belongs to the G-protein coupled receptor T2R family.</text>
</comment>
<keyword id="KW-1003">Cell membrane</keyword>
<keyword id="KW-0966">Cell projection</keyword>
<keyword id="KW-0969">Cilium</keyword>
<keyword id="KW-0297">G-protein coupled receptor</keyword>
<keyword id="KW-0325">Glycoprotein</keyword>
<keyword id="KW-0472">Membrane</keyword>
<keyword id="KW-0675">Receptor</keyword>
<keyword id="KW-1185">Reference proteome</keyword>
<keyword id="KW-0716">Sensory transduction</keyword>
<keyword id="KW-0919">Taste</keyword>
<keyword id="KW-0807">Transducer</keyword>
<keyword id="KW-0812">Transmembrane</keyword>
<keyword id="KW-1133">Transmembrane helix</keyword>